<dbReference type="EMBL" id="AF157835">
    <property type="protein sequence ID" value="AAF03955.1"/>
    <property type="molecule type" value="Genomic_DNA"/>
</dbReference>
<dbReference type="RefSeq" id="NP_050973.1">
    <property type="nucleotide sequence ID" value="NC_000935.1"/>
</dbReference>
<dbReference type="KEGG" id="vg:1262306"/>
<dbReference type="Proteomes" id="UP000000853">
    <property type="component" value="Genome"/>
</dbReference>
<keyword id="KW-1185">Reference proteome</keyword>
<gene>
    <name type="primary">12</name>
</gene>
<accession>Q9T1T6</accession>
<organismHost>
    <name type="scientific">Escherichia coli</name>
    <dbReference type="NCBI Taxonomy" id="562"/>
</organismHost>
<feature type="chain" id="PRO_0000077856" description="Putative protein p12">
    <location>
        <begin position="1"/>
        <end position="112"/>
    </location>
</feature>
<reference key="1">
    <citation type="journal article" date="1999" name="Virology">
        <title>Isolation and characterization of APSE-1, a bacteriophage infecting the secondary endosymbiont of acyrthosiphon pisum.</title>
        <authorList>
            <person name="van der Wilk F."/>
            <person name="Dullemans A.M."/>
            <person name="Verbeek M."/>
            <person name="van den Heuvel J.F.J.M."/>
        </authorList>
    </citation>
    <scope>NUCLEOTIDE SEQUENCE [LARGE SCALE GENOMIC DNA]</scope>
</reference>
<organism>
    <name type="scientific">Acyrthosiphon pisum secondary endosymbiont phage 1</name>
    <name type="common">Bacteriophage APSE-1</name>
    <dbReference type="NCBI Taxonomy" id="2682836"/>
    <lineage>
        <taxon>Viruses</taxon>
        <taxon>Duplodnaviria</taxon>
        <taxon>Heunggongvirae</taxon>
        <taxon>Uroviricota</taxon>
        <taxon>Caudoviricetes</taxon>
        <taxon>Sendosyvirus</taxon>
        <taxon>Sendosyvirus APSE1</taxon>
    </lineage>
</organism>
<protein>
    <recommendedName>
        <fullName>Putative protein p12</fullName>
    </recommendedName>
</protein>
<sequence>MRVAITEGPSPCTALIRFQPKSFITFYKHQTFFTDMHYNTFIAYRFFSSASCRCDLRPDNQSLHWLATNNPLSIPETAAVHVLPRQAWRTLMRPEENGKNLFGDIAPAAGPL</sequence>
<proteinExistence type="predicted"/>
<name>VP12_BPAPS</name>